<sequence length="669" mass="74414">MDPEQINEFVVGYLKKKGFSSAAKDLESYHHQNNNGSSFTSVDYHNDPELTKLIRSFSQQEDDPTRYREGYSKLRSWAYNSLDLYKHELLRVMYPVFIHCYMDLVGKGHTQEARAFFNSFRKDHEMVHLRDLQKLEGVLSPSHLEEMEFARSLRKSKVNIKFCQYSYELLLQYLHSTVSTLMLGIINEHINFQVYSGQPTSSSDDIEAVTIVGSFQDTANHINQKEIQWGLLEDSLEDRLEKTGGLLSDSEKGQGESKDGDADDSKKRSTEIGKQGSSLKKLKKDKAGNATAKVARLETITVSPAPRVKPELALPVMSTDVEQSILEDLRNRVQLSSVAMPSVSFYTFVNTHNGLNCSSISHDGSLVAGGFSDSSIKVWDMAKIGQAGSGALQAENDSSDQSIGPNGRRSYTLLLGHSGPVYSATFSPPGDFVLSSSADTTIRLWSTKLNANLVCYKGHNYPVWDAQFSPFGHYFASCSHDRTARIWSMDRIQPLRIMAGHLSDVDCVQWHPNCNYIATGSSDKTVRLWDVQTGECVRIFIGHRSMVLSLAMSPDGRYMASGDEDGTIMMWDLSTARCITPLMGHNSCVWSLSYSGEGSLLASGSADCTVKLWDVTSSTKLTKAEEKNGNSNRLRSLRTFPTKSTPVHALRFSRRNLLFAAGAISKPAN</sequence>
<gene>
    <name type="primary">TAF5</name>
    <name type="ordered locus">At5g25150</name>
    <name type="ORF">F21J6</name>
</gene>
<proteinExistence type="evidence at protein level"/>
<protein>
    <recommendedName>
        <fullName>Transcription initiation factor TFIID subunit 5</fullName>
    </recommendedName>
    <alternativeName>
        <fullName>TBP-associated factor 5</fullName>
        <shortName>AtTAF5</shortName>
    </alternativeName>
</protein>
<reference key="1">
    <citation type="journal article" date="2004" name="Gene">
        <title>TBP-associated factors in Arabidopsis.</title>
        <authorList>
            <person name="Lago C."/>
            <person name="Clerici E."/>
            <person name="Mizzi L."/>
            <person name="Colombo L."/>
            <person name="Kater M.M."/>
        </authorList>
    </citation>
    <scope>NUCLEOTIDE SEQUENCE [MRNA]</scope>
    <scope>IDENTIFICATION</scope>
    <scope>NOMENCLATURE</scope>
    <scope>TISSUE SPECIFICITY</scope>
</reference>
<reference key="2">
    <citation type="journal article" date="2007" name="Plant Mol. Biol.">
        <title>Yeast two-hybrid map of Arabidopsis TFIID.</title>
        <authorList>
            <person name="Lawit S.J."/>
            <person name="O'Grady K."/>
            <person name="Gurley W.B."/>
            <person name="Czarnecka-Verner E."/>
        </authorList>
    </citation>
    <scope>NUCLEOTIDE SEQUENCE [MRNA]</scope>
    <scope>SUBUNIT</scope>
    <scope>INTERACTION WITH TAF4; TAF4B; TAF6B; TAF8; TAF9; TAF12B; TAF14 AND TAF15B</scope>
</reference>
<reference key="3">
    <citation type="journal article" date="2000" name="Nature">
        <title>Sequence and analysis of chromosome 5 of the plant Arabidopsis thaliana.</title>
        <authorList>
            <person name="Tabata S."/>
            <person name="Kaneko T."/>
            <person name="Nakamura Y."/>
            <person name="Kotani H."/>
            <person name="Kato T."/>
            <person name="Asamizu E."/>
            <person name="Miyajima N."/>
            <person name="Sasamoto S."/>
            <person name="Kimura T."/>
            <person name="Hosouchi T."/>
            <person name="Kawashima K."/>
            <person name="Kohara M."/>
            <person name="Matsumoto M."/>
            <person name="Matsuno A."/>
            <person name="Muraki A."/>
            <person name="Nakayama S."/>
            <person name="Nakazaki N."/>
            <person name="Naruo K."/>
            <person name="Okumura S."/>
            <person name="Shinpo S."/>
            <person name="Takeuchi C."/>
            <person name="Wada T."/>
            <person name="Watanabe A."/>
            <person name="Yamada M."/>
            <person name="Yasuda M."/>
            <person name="Sato S."/>
            <person name="de la Bastide M."/>
            <person name="Huang E."/>
            <person name="Spiegel L."/>
            <person name="Gnoj L."/>
            <person name="O'Shaughnessy A."/>
            <person name="Preston R."/>
            <person name="Habermann K."/>
            <person name="Murray J."/>
            <person name="Johnson D."/>
            <person name="Rohlfing T."/>
            <person name="Nelson J."/>
            <person name="Stoneking T."/>
            <person name="Pepin K."/>
            <person name="Spieth J."/>
            <person name="Sekhon M."/>
            <person name="Armstrong J."/>
            <person name="Becker M."/>
            <person name="Belter E."/>
            <person name="Cordum H."/>
            <person name="Cordes M."/>
            <person name="Courtney L."/>
            <person name="Courtney W."/>
            <person name="Dante M."/>
            <person name="Du H."/>
            <person name="Edwards J."/>
            <person name="Fryman J."/>
            <person name="Haakensen B."/>
            <person name="Lamar E."/>
            <person name="Latreille P."/>
            <person name="Leonard S."/>
            <person name="Meyer R."/>
            <person name="Mulvaney E."/>
            <person name="Ozersky P."/>
            <person name="Riley A."/>
            <person name="Strowmatt C."/>
            <person name="Wagner-McPherson C."/>
            <person name="Wollam A."/>
            <person name="Yoakum M."/>
            <person name="Bell M."/>
            <person name="Dedhia N."/>
            <person name="Parnell L."/>
            <person name="Shah R."/>
            <person name="Rodriguez M."/>
            <person name="Hoon See L."/>
            <person name="Vil D."/>
            <person name="Baker J."/>
            <person name="Kirchoff K."/>
            <person name="Toth K."/>
            <person name="King L."/>
            <person name="Bahret A."/>
            <person name="Miller B."/>
            <person name="Marra M.A."/>
            <person name="Martienssen R."/>
            <person name="McCombie W.R."/>
            <person name="Wilson R.K."/>
            <person name="Murphy G."/>
            <person name="Bancroft I."/>
            <person name="Volckaert G."/>
            <person name="Wambutt R."/>
            <person name="Duesterhoeft A."/>
            <person name="Stiekema W."/>
            <person name="Pohl T."/>
            <person name="Entian K.-D."/>
            <person name="Terryn N."/>
            <person name="Hartley N."/>
            <person name="Bent E."/>
            <person name="Johnson S."/>
            <person name="Langham S.-A."/>
            <person name="McCullagh B."/>
            <person name="Robben J."/>
            <person name="Grymonprez B."/>
            <person name="Zimmermann W."/>
            <person name="Ramsperger U."/>
            <person name="Wedler H."/>
            <person name="Balke K."/>
            <person name="Wedler E."/>
            <person name="Peters S."/>
            <person name="van Staveren M."/>
            <person name="Dirkse W."/>
            <person name="Mooijman P."/>
            <person name="Klein Lankhorst R."/>
            <person name="Weitzenegger T."/>
            <person name="Bothe G."/>
            <person name="Rose M."/>
            <person name="Hauf J."/>
            <person name="Berneiser S."/>
            <person name="Hempel S."/>
            <person name="Feldpausch M."/>
            <person name="Lamberth S."/>
            <person name="Villarroel R."/>
            <person name="Gielen J."/>
            <person name="Ardiles W."/>
            <person name="Bents O."/>
            <person name="Lemcke K."/>
            <person name="Kolesov G."/>
            <person name="Mayer K.F.X."/>
            <person name="Rudd S."/>
            <person name="Schoof H."/>
            <person name="Schueller C."/>
            <person name="Zaccaria P."/>
            <person name="Mewes H.-W."/>
            <person name="Bevan M."/>
            <person name="Fransz P.F."/>
        </authorList>
    </citation>
    <scope>NUCLEOTIDE SEQUENCE [LARGE SCALE GENOMIC DNA]</scope>
    <source>
        <strain>cv. Columbia</strain>
    </source>
</reference>
<reference key="4">
    <citation type="journal article" date="2017" name="Plant J.">
        <title>Araport11: a complete reannotation of the Arabidopsis thaliana reference genome.</title>
        <authorList>
            <person name="Cheng C.Y."/>
            <person name="Krishnakumar V."/>
            <person name="Chan A.P."/>
            <person name="Thibaud-Nissen F."/>
            <person name="Schobel S."/>
            <person name="Town C.D."/>
        </authorList>
    </citation>
    <scope>GENOME REANNOTATION</scope>
    <source>
        <strain>cv. Columbia</strain>
    </source>
</reference>
<comment type="function">
    <text evidence="1">TAFs are components of the transcription factor IID (TFIID) complex that is essential for mediating regulation of RNA polymerase transcription.</text>
</comment>
<comment type="subunit">
    <text evidence="4">Component of the TFIID complexe. TFIID is composed of TATA binding protein (TBP) and a number of TBP-associated factors (TAFs) whose MWs range from 14-217 kDa. May homodimerize to form the scaffold for the complex. Interacts with TAF4, TAF4B, TAF6B, TAF8, TAF9, TAF12B, TAF14 and TAF15B.</text>
</comment>
<comment type="interaction">
    <interactant intactId="EBI-1247501">
        <id>Q6S7B0</id>
    </interactant>
    <interactant intactId="EBI-1245557">
        <id>F4HVA6</id>
        <label>TAF6B</label>
    </interactant>
    <organismsDiffer>false</organismsDiffer>
    <experiments>3</experiments>
</comment>
<comment type="subcellular location">
    <subcellularLocation>
        <location evidence="5">Nucleus</location>
    </subcellularLocation>
</comment>
<comment type="tissue specificity">
    <text evidence="3">Expressed in roots, leaves and inflorescences.</text>
</comment>
<comment type="similarity">
    <text evidence="5">Belongs to the TAF5 family.</text>
</comment>
<accession>Q6S7B0</accession>
<organism>
    <name type="scientific">Arabidopsis thaliana</name>
    <name type="common">Mouse-ear cress</name>
    <dbReference type="NCBI Taxonomy" id="3702"/>
    <lineage>
        <taxon>Eukaryota</taxon>
        <taxon>Viridiplantae</taxon>
        <taxon>Streptophyta</taxon>
        <taxon>Embryophyta</taxon>
        <taxon>Tracheophyta</taxon>
        <taxon>Spermatophyta</taxon>
        <taxon>Magnoliopsida</taxon>
        <taxon>eudicotyledons</taxon>
        <taxon>Gunneridae</taxon>
        <taxon>Pentapetalae</taxon>
        <taxon>rosids</taxon>
        <taxon>malvids</taxon>
        <taxon>Brassicales</taxon>
        <taxon>Brassicaceae</taxon>
        <taxon>Camelineae</taxon>
        <taxon>Arabidopsis</taxon>
    </lineage>
</organism>
<dbReference type="EMBL" id="AY463620">
    <property type="protein sequence ID" value="AAR28022.1"/>
    <property type="molecule type" value="mRNA"/>
</dbReference>
<dbReference type="EMBL" id="AC006259">
    <property type="status" value="NOT_ANNOTATED_CDS"/>
    <property type="molecule type" value="Genomic_DNA"/>
</dbReference>
<dbReference type="EMBL" id="CP002688">
    <property type="protein sequence ID" value="AED93406.1"/>
    <property type="molecule type" value="Genomic_DNA"/>
</dbReference>
<dbReference type="RefSeq" id="NP_197897.3">
    <property type="nucleotide sequence ID" value="NM_122424.4"/>
</dbReference>
<dbReference type="SMR" id="Q6S7B0"/>
<dbReference type="BioGRID" id="17861">
    <property type="interactions" value="23"/>
</dbReference>
<dbReference type="FunCoup" id="Q6S7B0">
    <property type="interactions" value="3737"/>
</dbReference>
<dbReference type="IntAct" id="Q6S7B0">
    <property type="interactions" value="12"/>
</dbReference>
<dbReference type="STRING" id="3702.Q6S7B0"/>
<dbReference type="iPTMnet" id="Q6S7B0"/>
<dbReference type="PaxDb" id="3702-AT5G25150.1"/>
<dbReference type="ProteomicsDB" id="233007"/>
<dbReference type="EnsemblPlants" id="AT5G25150.1">
    <property type="protein sequence ID" value="AT5G25150.1"/>
    <property type="gene ID" value="AT5G25150"/>
</dbReference>
<dbReference type="GeneID" id="832586"/>
<dbReference type="Gramene" id="AT5G25150.1">
    <property type="protein sequence ID" value="AT5G25150.1"/>
    <property type="gene ID" value="AT5G25150"/>
</dbReference>
<dbReference type="KEGG" id="ath:AT5G25150"/>
<dbReference type="Araport" id="AT5G25150"/>
<dbReference type="TAIR" id="AT5G25150">
    <property type="gene designation" value="TAF5"/>
</dbReference>
<dbReference type="eggNOG" id="KOG0263">
    <property type="taxonomic scope" value="Eukaryota"/>
</dbReference>
<dbReference type="HOGENOM" id="CLU_005884_2_1_1"/>
<dbReference type="InParanoid" id="Q6S7B0"/>
<dbReference type="OMA" id="HNHPVWD"/>
<dbReference type="OrthoDB" id="674604at2759"/>
<dbReference type="PhylomeDB" id="Q6S7B0"/>
<dbReference type="PRO" id="PR:Q6S7B0"/>
<dbReference type="Proteomes" id="UP000006548">
    <property type="component" value="Chromosome 5"/>
</dbReference>
<dbReference type="ExpressionAtlas" id="Q6S7B0">
    <property type="expression patterns" value="baseline and differential"/>
</dbReference>
<dbReference type="GO" id="GO:0005634">
    <property type="term" value="C:nucleus"/>
    <property type="evidence" value="ECO:0007669"/>
    <property type="project" value="UniProtKB-SubCell"/>
</dbReference>
<dbReference type="CDD" id="cd08044">
    <property type="entry name" value="TAF5_NTD2"/>
    <property type="match status" value="1"/>
</dbReference>
<dbReference type="CDD" id="cd00200">
    <property type="entry name" value="WD40"/>
    <property type="match status" value="1"/>
</dbReference>
<dbReference type="FunFam" id="2.130.10.10:FF:000243">
    <property type="entry name" value="Transcription initiation factor TFIID subunit 5"/>
    <property type="match status" value="1"/>
</dbReference>
<dbReference type="Gene3D" id="1.25.40.500">
    <property type="entry name" value="TFIID subunit TAF5, NTD2 domain"/>
    <property type="match status" value="1"/>
</dbReference>
<dbReference type="Gene3D" id="2.130.10.10">
    <property type="entry name" value="YVTN repeat-like/Quinoprotein amine dehydrogenase"/>
    <property type="match status" value="3"/>
</dbReference>
<dbReference type="InterPro" id="IPR020472">
    <property type="entry name" value="G-protein_beta_WD-40_rep"/>
</dbReference>
<dbReference type="InterPro" id="IPR007582">
    <property type="entry name" value="TFIID_NTD2"/>
</dbReference>
<dbReference type="InterPro" id="IPR037264">
    <property type="entry name" value="TFIID_NTD2_sf"/>
</dbReference>
<dbReference type="InterPro" id="IPR015943">
    <property type="entry name" value="WD40/YVTN_repeat-like_dom_sf"/>
</dbReference>
<dbReference type="InterPro" id="IPR019775">
    <property type="entry name" value="WD40_repeat_CS"/>
</dbReference>
<dbReference type="InterPro" id="IPR036322">
    <property type="entry name" value="WD40_repeat_dom_sf"/>
</dbReference>
<dbReference type="InterPro" id="IPR001680">
    <property type="entry name" value="WD40_rpt"/>
</dbReference>
<dbReference type="PANTHER" id="PTHR19879:SF1">
    <property type="entry name" value="CANNONBALL-RELATED"/>
    <property type="match status" value="1"/>
</dbReference>
<dbReference type="PANTHER" id="PTHR19879">
    <property type="entry name" value="TRANSCRIPTION INITIATION FACTOR TFIID"/>
    <property type="match status" value="1"/>
</dbReference>
<dbReference type="Pfam" id="PF04494">
    <property type="entry name" value="TFIID_NTD2"/>
    <property type="match status" value="1"/>
</dbReference>
<dbReference type="Pfam" id="PF00400">
    <property type="entry name" value="WD40"/>
    <property type="match status" value="6"/>
</dbReference>
<dbReference type="PRINTS" id="PR00320">
    <property type="entry name" value="GPROTEINBRPT"/>
</dbReference>
<dbReference type="SMART" id="SM00320">
    <property type="entry name" value="WD40"/>
    <property type="match status" value="6"/>
</dbReference>
<dbReference type="SUPFAM" id="SSF160897">
    <property type="entry name" value="Taf5 N-terminal domain-like"/>
    <property type="match status" value="1"/>
</dbReference>
<dbReference type="SUPFAM" id="SSF50978">
    <property type="entry name" value="WD40 repeat-like"/>
    <property type="match status" value="1"/>
</dbReference>
<dbReference type="PROSITE" id="PS00678">
    <property type="entry name" value="WD_REPEATS_1"/>
    <property type="match status" value="4"/>
</dbReference>
<dbReference type="PROSITE" id="PS50082">
    <property type="entry name" value="WD_REPEATS_2"/>
    <property type="match status" value="6"/>
</dbReference>
<dbReference type="PROSITE" id="PS50294">
    <property type="entry name" value="WD_REPEATS_REGION"/>
    <property type="match status" value="1"/>
</dbReference>
<evidence type="ECO:0000250" key="1"/>
<evidence type="ECO:0000256" key="2">
    <source>
        <dbReference type="SAM" id="MobiDB-lite"/>
    </source>
</evidence>
<evidence type="ECO:0000269" key="3">
    <source>
    </source>
</evidence>
<evidence type="ECO:0000269" key="4">
    <source>
    </source>
</evidence>
<evidence type="ECO:0000305" key="5"/>
<name>TAF5_ARATH</name>
<feature type="chain" id="PRO_0000424038" description="Transcription initiation factor TFIID subunit 5">
    <location>
        <begin position="1"/>
        <end position="669"/>
    </location>
</feature>
<feature type="repeat" description="WD 1">
    <location>
        <begin position="350"/>
        <end position="389"/>
    </location>
</feature>
<feature type="repeat" description="WD 2">
    <location>
        <begin position="416"/>
        <end position="455"/>
    </location>
</feature>
<feature type="repeat" description="WD 3">
    <location>
        <begin position="458"/>
        <end position="497"/>
    </location>
</feature>
<feature type="repeat" description="WD 4">
    <location>
        <begin position="500"/>
        <end position="541"/>
    </location>
</feature>
<feature type="repeat" description="WD 5">
    <location>
        <begin position="543"/>
        <end position="581"/>
    </location>
</feature>
<feature type="repeat" description="WD 6">
    <location>
        <begin position="584"/>
        <end position="623"/>
    </location>
</feature>
<feature type="region of interest" description="Disordered" evidence="2">
    <location>
        <begin position="244"/>
        <end position="285"/>
    </location>
</feature>
<feature type="compositionally biased region" description="Basic and acidic residues" evidence="2">
    <location>
        <begin position="249"/>
        <end position="271"/>
    </location>
</feature>
<keyword id="KW-0010">Activator</keyword>
<keyword id="KW-0539">Nucleus</keyword>
<keyword id="KW-1185">Reference proteome</keyword>
<keyword id="KW-0677">Repeat</keyword>
<keyword id="KW-0804">Transcription</keyword>
<keyword id="KW-0805">Transcription regulation</keyword>
<keyword id="KW-0853">WD repeat</keyword>